<dbReference type="EMBL" id="CP001016">
    <property type="protein sequence ID" value="ACB94997.1"/>
    <property type="molecule type" value="Genomic_DNA"/>
</dbReference>
<dbReference type="RefSeq" id="WP_012384354.1">
    <property type="nucleotide sequence ID" value="NC_010581.1"/>
</dbReference>
<dbReference type="SMR" id="B2IK65"/>
<dbReference type="STRING" id="395963.Bind_1357"/>
<dbReference type="KEGG" id="bid:Bind_1357"/>
<dbReference type="eggNOG" id="COG0090">
    <property type="taxonomic scope" value="Bacteria"/>
</dbReference>
<dbReference type="HOGENOM" id="CLU_036235_2_1_5"/>
<dbReference type="OrthoDB" id="9778722at2"/>
<dbReference type="Proteomes" id="UP000001695">
    <property type="component" value="Chromosome"/>
</dbReference>
<dbReference type="GO" id="GO:0015934">
    <property type="term" value="C:large ribosomal subunit"/>
    <property type="evidence" value="ECO:0007669"/>
    <property type="project" value="InterPro"/>
</dbReference>
<dbReference type="GO" id="GO:0019843">
    <property type="term" value="F:rRNA binding"/>
    <property type="evidence" value="ECO:0007669"/>
    <property type="project" value="UniProtKB-UniRule"/>
</dbReference>
<dbReference type="GO" id="GO:0003735">
    <property type="term" value="F:structural constituent of ribosome"/>
    <property type="evidence" value="ECO:0007669"/>
    <property type="project" value="InterPro"/>
</dbReference>
<dbReference type="GO" id="GO:0016740">
    <property type="term" value="F:transferase activity"/>
    <property type="evidence" value="ECO:0007669"/>
    <property type="project" value="InterPro"/>
</dbReference>
<dbReference type="GO" id="GO:0002181">
    <property type="term" value="P:cytoplasmic translation"/>
    <property type="evidence" value="ECO:0007669"/>
    <property type="project" value="TreeGrafter"/>
</dbReference>
<dbReference type="FunFam" id="2.30.30.30:FF:000055">
    <property type="entry name" value="50S ribosomal protein L2"/>
    <property type="match status" value="1"/>
</dbReference>
<dbReference type="FunFam" id="2.40.50.140:FF:000003">
    <property type="entry name" value="50S ribosomal protein L2"/>
    <property type="match status" value="1"/>
</dbReference>
<dbReference type="FunFam" id="4.10.950.10:FF:000001">
    <property type="entry name" value="50S ribosomal protein L2"/>
    <property type="match status" value="1"/>
</dbReference>
<dbReference type="Gene3D" id="2.30.30.30">
    <property type="match status" value="1"/>
</dbReference>
<dbReference type="Gene3D" id="2.40.50.140">
    <property type="entry name" value="Nucleic acid-binding proteins"/>
    <property type="match status" value="1"/>
</dbReference>
<dbReference type="Gene3D" id="4.10.950.10">
    <property type="entry name" value="Ribosomal protein L2, domain 3"/>
    <property type="match status" value="1"/>
</dbReference>
<dbReference type="HAMAP" id="MF_01320_B">
    <property type="entry name" value="Ribosomal_uL2_B"/>
    <property type="match status" value="1"/>
</dbReference>
<dbReference type="InterPro" id="IPR012340">
    <property type="entry name" value="NA-bd_OB-fold"/>
</dbReference>
<dbReference type="InterPro" id="IPR014722">
    <property type="entry name" value="Rib_uL2_dom2"/>
</dbReference>
<dbReference type="InterPro" id="IPR002171">
    <property type="entry name" value="Ribosomal_uL2"/>
</dbReference>
<dbReference type="InterPro" id="IPR005880">
    <property type="entry name" value="Ribosomal_uL2_bac/org-type"/>
</dbReference>
<dbReference type="InterPro" id="IPR022669">
    <property type="entry name" value="Ribosomal_uL2_C"/>
</dbReference>
<dbReference type="InterPro" id="IPR022671">
    <property type="entry name" value="Ribosomal_uL2_CS"/>
</dbReference>
<dbReference type="InterPro" id="IPR014726">
    <property type="entry name" value="Ribosomal_uL2_dom3"/>
</dbReference>
<dbReference type="InterPro" id="IPR022666">
    <property type="entry name" value="Ribosomal_uL2_RNA-bd_dom"/>
</dbReference>
<dbReference type="InterPro" id="IPR008991">
    <property type="entry name" value="Translation_prot_SH3-like_sf"/>
</dbReference>
<dbReference type="NCBIfam" id="TIGR01171">
    <property type="entry name" value="rplB_bact"/>
    <property type="match status" value="1"/>
</dbReference>
<dbReference type="PANTHER" id="PTHR13691:SF5">
    <property type="entry name" value="LARGE RIBOSOMAL SUBUNIT PROTEIN UL2M"/>
    <property type="match status" value="1"/>
</dbReference>
<dbReference type="PANTHER" id="PTHR13691">
    <property type="entry name" value="RIBOSOMAL PROTEIN L2"/>
    <property type="match status" value="1"/>
</dbReference>
<dbReference type="Pfam" id="PF00181">
    <property type="entry name" value="Ribosomal_L2"/>
    <property type="match status" value="1"/>
</dbReference>
<dbReference type="Pfam" id="PF03947">
    <property type="entry name" value="Ribosomal_L2_C"/>
    <property type="match status" value="1"/>
</dbReference>
<dbReference type="PIRSF" id="PIRSF002158">
    <property type="entry name" value="Ribosomal_L2"/>
    <property type="match status" value="1"/>
</dbReference>
<dbReference type="SMART" id="SM01383">
    <property type="entry name" value="Ribosomal_L2"/>
    <property type="match status" value="1"/>
</dbReference>
<dbReference type="SMART" id="SM01382">
    <property type="entry name" value="Ribosomal_L2_C"/>
    <property type="match status" value="1"/>
</dbReference>
<dbReference type="SUPFAM" id="SSF50249">
    <property type="entry name" value="Nucleic acid-binding proteins"/>
    <property type="match status" value="1"/>
</dbReference>
<dbReference type="SUPFAM" id="SSF50104">
    <property type="entry name" value="Translation proteins SH3-like domain"/>
    <property type="match status" value="1"/>
</dbReference>
<dbReference type="PROSITE" id="PS00467">
    <property type="entry name" value="RIBOSOMAL_L2"/>
    <property type="match status" value="1"/>
</dbReference>
<organism>
    <name type="scientific">Beijerinckia indica subsp. indica (strain ATCC 9039 / DSM 1715 / NCIMB 8712)</name>
    <dbReference type="NCBI Taxonomy" id="395963"/>
    <lineage>
        <taxon>Bacteria</taxon>
        <taxon>Pseudomonadati</taxon>
        <taxon>Pseudomonadota</taxon>
        <taxon>Alphaproteobacteria</taxon>
        <taxon>Hyphomicrobiales</taxon>
        <taxon>Beijerinckiaceae</taxon>
        <taxon>Beijerinckia</taxon>
    </lineage>
</organism>
<gene>
    <name evidence="1" type="primary">rplB</name>
    <name type="ordered locus">Bind_1357</name>
</gene>
<proteinExistence type="inferred from homology"/>
<reference key="1">
    <citation type="journal article" date="2010" name="J. Bacteriol.">
        <title>Complete genome sequence of Beijerinckia indica subsp. indica.</title>
        <authorList>
            <person name="Tamas I."/>
            <person name="Dedysh S.N."/>
            <person name="Liesack W."/>
            <person name="Stott M.B."/>
            <person name="Alam M."/>
            <person name="Murrell J.C."/>
            <person name="Dunfield P.F."/>
        </authorList>
    </citation>
    <scope>NUCLEOTIDE SEQUENCE [LARGE SCALE GENOMIC DNA]</scope>
    <source>
        <strain>ATCC 9039 / DSM 1715 / NCIMB 8712</strain>
    </source>
</reference>
<protein>
    <recommendedName>
        <fullName evidence="1">Large ribosomal subunit protein uL2</fullName>
    </recommendedName>
    <alternativeName>
        <fullName evidence="3">50S ribosomal protein L2</fullName>
    </alternativeName>
</protein>
<keyword id="KW-1185">Reference proteome</keyword>
<keyword id="KW-0687">Ribonucleoprotein</keyword>
<keyword id="KW-0689">Ribosomal protein</keyword>
<keyword id="KW-0694">RNA-binding</keyword>
<keyword id="KW-0699">rRNA-binding</keyword>
<comment type="function">
    <text evidence="1">One of the primary rRNA binding proteins. Required for association of the 30S and 50S subunits to form the 70S ribosome, for tRNA binding and peptide bond formation. It has been suggested to have peptidyltransferase activity; this is somewhat controversial. Makes several contacts with the 16S rRNA in the 70S ribosome.</text>
</comment>
<comment type="subunit">
    <text evidence="1">Part of the 50S ribosomal subunit. Forms a bridge to the 30S subunit in the 70S ribosome.</text>
</comment>
<comment type="similarity">
    <text evidence="1">Belongs to the universal ribosomal protein uL2 family.</text>
</comment>
<name>RL2_BEII9</name>
<sequence length="279" mass="30626">MALKTFKPITPSLRQLVIVDRSNLYKGKPVKQLTEGKSSSGGRNNNGRVTVRFRGGGHKQTYRIIDFKRRKLDMPAKVERIEYDPNRTSFIALIRYADDELSYIIAPQKLAVGDEVISGQQVDVKPGNAMALANMPVGTIVHNIEMKIGKGAAMVRSAGTYAQVVGRDQGYVIVRLNSGEQRLIHGQCFATVGAVSNPDHMNASIGKAGRSRWLGRRPHNRGVTMNPVDHPHGGGEGRTSGGRHPVTPWGKPTKGKKTRTNKSTDKFIVTSRHKSKKKG</sequence>
<feature type="chain" id="PRO_1000141508" description="Large ribosomal subunit protein uL2">
    <location>
        <begin position="1"/>
        <end position="279"/>
    </location>
</feature>
<feature type="region of interest" description="Disordered" evidence="2">
    <location>
        <begin position="29"/>
        <end position="49"/>
    </location>
</feature>
<feature type="region of interest" description="Disordered" evidence="2">
    <location>
        <begin position="202"/>
        <end position="279"/>
    </location>
</feature>
<feature type="compositionally biased region" description="Low complexity" evidence="2">
    <location>
        <begin position="36"/>
        <end position="49"/>
    </location>
</feature>
<feature type="compositionally biased region" description="Basic residues" evidence="2">
    <location>
        <begin position="209"/>
        <end position="220"/>
    </location>
</feature>
<evidence type="ECO:0000255" key="1">
    <source>
        <dbReference type="HAMAP-Rule" id="MF_01320"/>
    </source>
</evidence>
<evidence type="ECO:0000256" key="2">
    <source>
        <dbReference type="SAM" id="MobiDB-lite"/>
    </source>
</evidence>
<evidence type="ECO:0000305" key="3"/>
<accession>B2IK65</accession>